<protein>
    <recommendedName>
        <fullName evidence="1">Uroporphyrinogen decarboxylase</fullName>
        <shortName evidence="1">UPD</shortName>
        <shortName evidence="1">URO-D</shortName>
        <ecNumber evidence="1">4.1.1.37</ecNumber>
    </recommendedName>
</protein>
<evidence type="ECO:0000255" key="1">
    <source>
        <dbReference type="HAMAP-Rule" id="MF_00218"/>
    </source>
</evidence>
<dbReference type="EC" id="4.1.1.37" evidence="1"/>
<dbReference type="EMBL" id="CP000647">
    <property type="protein sequence ID" value="ABR79738.1"/>
    <property type="molecule type" value="Genomic_DNA"/>
</dbReference>
<dbReference type="RefSeq" id="WP_002884329.1">
    <property type="nucleotide sequence ID" value="NC_009648.1"/>
</dbReference>
<dbReference type="SMR" id="A6TGQ4"/>
<dbReference type="STRING" id="272620.KPN_04379"/>
<dbReference type="jPOST" id="A6TGQ4"/>
<dbReference type="PaxDb" id="272620-KPN_04379"/>
<dbReference type="EnsemblBacteria" id="ABR79738">
    <property type="protein sequence ID" value="ABR79738"/>
    <property type="gene ID" value="KPN_04379"/>
</dbReference>
<dbReference type="KEGG" id="kpn:KPN_04379"/>
<dbReference type="HOGENOM" id="CLU_040933_0_0_6"/>
<dbReference type="UniPathway" id="UPA00251">
    <property type="reaction ID" value="UER00321"/>
</dbReference>
<dbReference type="Proteomes" id="UP000000265">
    <property type="component" value="Chromosome"/>
</dbReference>
<dbReference type="GO" id="GO:0005829">
    <property type="term" value="C:cytosol"/>
    <property type="evidence" value="ECO:0007669"/>
    <property type="project" value="TreeGrafter"/>
</dbReference>
<dbReference type="GO" id="GO:0004853">
    <property type="term" value="F:uroporphyrinogen decarboxylase activity"/>
    <property type="evidence" value="ECO:0007669"/>
    <property type="project" value="UniProtKB-UniRule"/>
</dbReference>
<dbReference type="GO" id="GO:0019353">
    <property type="term" value="P:protoporphyrinogen IX biosynthetic process from glutamate"/>
    <property type="evidence" value="ECO:0007669"/>
    <property type="project" value="TreeGrafter"/>
</dbReference>
<dbReference type="CDD" id="cd00717">
    <property type="entry name" value="URO-D"/>
    <property type="match status" value="1"/>
</dbReference>
<dbReference type="FunFam" id="3.20.20.210:FF:000001">
    <property type="entry name" value="Uroporphyrinogen decarboxylase"/>
    <property type="match status" value="1"/>
</dbReference>
<dbReference type="Gene3D" id="3.20.20.210">
    <property type="match status" value="1"/>
</dbReference>
<dbReference type="HAMAP" id="MF_00218">
    <property type="entry name" value="URO_D"/>
    <property type="match status" value="1"/>
</dbReference>
<dbReference type="InterPro" id="IPR038071">
    <property type="entry name" value="UROD/MetE-like_sf"/>
</dbReference>
<dbReference type="InterPro" id="IPR006361">
    <property type="entry name" value="Uroporphyrinogen_deCO2ase_HemE"/>
</dbReference>
<dbReference type="InterPro" id="IPR000257">
    <property type="entry name" value="Uroporphyrinogen_deCOase"/>
</dbReference>
<dbReference type="NCBIfam" id="TIGR01464">
    <property type="entry name" value="hemE"/>
    <property type="match status" value="1"/>
</dbReference>
<dbReference type="PANTHER" id="PTHR21091">
    <property type="entry name" value="METHYLTETRAHYDROFOLATE:HOMOCYSTEINE METHYLTRANSFERASE RELATED"/>
    <property type="match status" value="1"/>
</dbReference>
<dbReference type="PANTHER" id="PTHR21091:SF169">
    <property type="entry name" value="UROPORPHYRINOGEN DECARBOXYLASE"/>
    <property type="match status" value="1"/>
</dbReference>
<dbReference type="Pfam" id="PF01208">
    <property type="entry name" value="URO-D"/>
    <property type="match status" value="1"/>
</dbReference>
<dbReference type="SUPFAM" id="SSF51726">
    <property type="entry name" value="UROD/MetE-like"/>
    <property type="match status" value="1"/>
</dbReference>
<dbReference type="PROSITE" id="PS00906">
    <property type="entry name" value="UROD_1"/>
    <property type="match status" value="1"/>
</dbReference>
<dbReference type="PROSITE" id="PS00907">
    <property type="entry name" value="UROD_2"/>
    <property type="match status" value="1"/>
</dbReference>
<reference key="1">
    <citation type="submission" date="2006-09" db="EMBL/GenBank/DDBJ databases">
        <authorList>
            <consortium name="The Klebsiella pneumonia Genome Sequencing Project"/>
            <person name="McClelland M."/>
            <person name="Sanderson E.K."/>
            <person name="Spieth J."/>
            <person name="Clifton W.S."/>
            <person name="Latreille P."/>
            <person name="Sabo A."/>
            <person name="Pepin K."/>
            <person name="Bhonagiri V."/>
            <person name="Porwollik S."/>
            <person name="Ali J."/>
            <person name="Wilson R.K."/>
        </authorList>
    </citation>
    <scope>NUCLEOTIDE SEQUENCE [LARGE SCALE GENOMIC DNA]</scope>
    <source>
        <strain>ATCC 700721 / MGH 78578</strain>
    </source>
</reference>
<accession>A6TGQ4</accession>
<proteinExistence type="inferred from homology"/>
<sequence>MTELKNDRYLRALLRQPVDVTPVWMMRQAGRYLPEYKATRAQAGDFMSLCKNAELACEVTLQPLRRYPLDAAILFSDILTIPDAMGLGLYFEAGEGPRFTSPVKSKADVDKLPIPDPEQELGYVMNAVRTIRRELKGEVPLIGFSGSPWTLATYMVEGGSSKAFTVIKKMMYAEPQALHALLDKLAKSVTLYLNAQIKAGAQSVMIFDTWGGVLTGRDYQQFSLYYMHKIVDGLLRENEGRRVPVTLFTKGGGQWLEAMAETGCDALGLDWTTDIADARRRVGNKVALQGNMDPSMLYASAPRIEEEVATILAGFGQGEGHVFNLGHGIHQDVDPEHAGVFVEAVHRLSAPYHQ</sequence>
<keyword id="KW-0963">Cytoplasm</keyword>
<keyword id="KW-0210">Decarboxylase</keyword>
<keyword id="KW-0456">Lyase</keyword>
<keyword id="KW-0627">Porphyrin biosynthesis</keyword>
<feature type="chain" id="PRO_1000023913" description="Uroporphyrinogen decarboxylase">
    <location>
        <begin position="1"/>
        <end position="354"/>
    </location>
</feature>
<feature type="binding site" evidence="1">
    <location>
        <begin position="27"/>
        <end position="31"/>
    </location>
    <ligand>
        <name>substrate</name>
    </ligand>
</feature>
<feature type="binding site" evidence="1">
    <location>
        <position position="77"/>
    </location>
    <ligand>
        <name>substrate</name>
    </ligand>
</feature>
<feature type="binding site" evidence="1">
    <location>
        <position position="154"/>
    </location>
    <ligand>
        <name>substrate</name>
    </ligand>
</feature>
<feature type="binding site" evidence="1">
    <location>
        <position position="209"/>
    </location>
    <ligand>
        <name>substrate</name>
    </ligand>
</feature>
<feature type="binding site" evidence="1">
    <location>
        <position position="327"/>
    </location>
    <ligand>
        <name>substrate</name>
    </ligand>
</feature>
<feature type="site" description="Transition state stabilizer" evidence="1">
    <location>
        <position position="77"/>
    </location>
</feature>
<gene>
    <name evidence="1" type="primary">hemE</name>
    <name type="ordered locus">KPN78578_43140</name>
    <name type="ORF">KPN_04379</name>
</gene>
<name>DCUP_KLEP7</name>
<organism>
    <name type="scientific">Klebsiella pneumoniae subsp. pneumoniae (strain ATCC 700721 / MGH 78578)</name>
    <dbReference type="NCBI Taxonomy" id="272620"/>
    <lineage>
        <taxon>Bacteria</taxon>
        <taxon>Pseudomonadati</taxon>
        <taxon>Pseudomonadota</taxon>
        <taxon>Gammaproteobacteria</taxon>
        <taxon>Enterobacterales</taxon>
        <taxon>Enterobacteriaceae</taxon>
        <taxon>Klebsiella/Raoultella group</taxon>
        <taxon>Klebsiella</taxon>
        <taxon>Klebsiella pneumoniae complex</taxon>
    </lineage>
</organism>
<comment type="function">
    <text evidence="1">Catalyzes the decarboxylation of four acetate groups of uroporphyrinogen-III to yield coproporphyrinogen-III.</text>
</comment>
<comment type="catalytic activity">
    <reaction evidence="1">
        <text>uroporphyrinogen III + 4 H(+) = coproporphyrinogen III + 4 CO2</text>
        <dbReference type="Rhea" id="RHEA:19865"/>
        <dbReference type="ChEBI" id="CHEBI:15378"/>
        <dbReference type="ChEBI" id="CHEBI:16526"/>
        <dbReference type="ChEBI" id="CHEBI:57308"/>
        <dbReference type="ChEBI" id="CHEBI:57309"/>
        <dbReference type="EC" id="4.1.1.37"/>
    </reaction>
</comment>
<comment type="pathway">
    <text evidence="1">Porphyrin-containing compound metabolism; protoporphyrin-IX biosynthesis; coproporphyrinogen-III from 5-aminolevulinate: step 4/4.</text>
</comment>
<comment type="subunit">
    <text evidence="1">Homodimer.</text>
</comment>
<comment type="subcellular location">
    <subcellularLocation>
        <location evidence="1">Cytoplasm</location>
    </subcellularLocation>
</comment>
<comment type="similarity">
    <text evidence="1">Belongs to the uroporphyrinogen decarboxylase family.</text>
</comment>